<sequence length="365" mass="36955">MKLSALLALSASTAVLAAPAVHHSDNHHHNDKRAVVTVTQYVNADGAVVIPAATTATSAAADGKVESVAAATTTLSSTAAAATTSAAASSSSSSSSSSSSSSSVGSGDFEDGTISCSDFPSGQGAVSLDWLGLGGWASIMDMNGNTATSCQDGYYCSYACSPGYAKTQWPSEQPSDGRSVGGLYCKNGKLYRSNTDTNSLCVEGQGSAQAVNKVSGSIAICGTDYPGSENMVVPTVVGAGSSQPINVIKEDSYYQWQGKKTSAQYYVNNAGVSVEDGCIWGTEGSGVGNWAPVVLGAGYTDGITYLSIIPNPNNKEAPNFNIKIVATDGSTVNGACSYENGVYSGSGSDGCTVSVTSGSANFVFY</sequence>
<feature type="signal peptide" evidence="1">
    <location>
        <begin position="1"/>
        <end position="17"/>
    </location>
</feature>
<feature type="chain" id="PRO_0000194002" description="Probable secreted beta-glucosidase UTH1">
    <location>
        <begin position="18"/>
        <end position="365"/>
    </location>
</feature>
<proteinExistence type="evidence at protein level"/>
<comment type="function">
    <text evidence="2 3 4 6 8 9 10 11">Involved in aging, oxidative stress response, and in the regulation of mitochondrial biogenesis. Inactivation of UTH1 increases life span, leads to higher resistance to heat stress and against hydrogen peroxide, and increases sensitivity to the superoxide radical-generating drug paraquat and to copper. Also required for the selective autophagic degradation of mitochondria (mitophagy) in response to nitrogen starvation. Involved in the remodeling of the cell wall during the various phases of yeast culture development and under various environmental conditions and plays a role in septation. Involved in cell sensitivity to boric acid.</text>
</comment>
<comment type="subcellular location">
    <subcellularLocation>
        <location evidence="5">Mitochondrion outer membrane</location>
        <topology evidence="5">Peripheral membrane protein</topology>
    </subcellularLocation>
    <subcellularLocation>
        <location evidence="5">Secreted</location>
        <location evidence="5">Cell wall</location>
    </subcellularLocation>
    <text>Non-covalently bound to the cell wall (PubMed:11958935).</text>
</comment>
<comment type="induction">
    <text evidence="10 11">Induced by hydrogen peroxide. Repressed by superoxide radicals and anoxia.</text>
</comment>
<comment type="disruption phenotype">
    <text evidence="10">Leads to increased resistance to zymolyase treatment and to boric acid.</text>
</comment>
<comment type="miscellaneous">
    <text evidence="7">Present with 56900 molecules/cell in log phase SD medium.</text>
</comment>
<comment type="similarity">
    <text evidence="12">Belongs to the SUN family.</text>
</comment>
<comment type="sequence caution" evidence="12">
    <conflict type="erroneous initiation">
        <sequence resource="EMBL-CDS" id="CAA82118"/>
    </conflict>
    <text>Extended N-terminus.</text>
</comment>
<dbReference type="EC" id="3.2.1.-"/>
<dbReference type="EMBL" id="Z28267">
    <property type="protein sequence ID" value="CAA82118.1"/>
    <property type="status" value="ALT_INIT"/>
    <property type="molecule type" value="Genomic_DNA"/>
</dbReference>
<dbReference type="EMBL" id="BK006944">
    <property type="protein sequence ID" value="DAA09194.1"/>
    <property type="molecule type" value="Genomic_DNA"/>
</dbReference>
<dbReference type="PIR" id="S38114">
    <property type="entry name" value="S38114"/>
</dbReference>
<dbReference type="RefSeq" id="NP_012968.4">
    <property type="nucleotide sequence ID" value="NM_001179832.3"/>
</dbReference>
<dbReference type="BioGRID" id="34174">
    <property type="interactions" value="248"/>
</dbReference>
<dbReference type="FunCoup" id="P36135">
    <property type="interactions" value="123"/>
</dbReference>
<dbReference type="IntAct" id="P36135">
    <property type="interactions" value="1"/>
</dbReference>
<dbReference type="MINT" id="P36135"/>
<dbReference type="STRING" id="4932.YKR042W"/>
<dbReference type="CAZy" id="GH132">
    <property type="family name" value="Glycoside Hydrolase Family 132"/>
</dbReference>
<dbReference type="iPTMnet" id="P36135"/>
<dbReference type="PaxDb" id="4932-YKR042W"/>
<dbReference type="PeptideAtlas" id="P36135"/>
<dbReference type="EnsemblFungi" id="YKR042W_mRNA">
    <property type="protein sequence ID" value="YKR042W"/>
    <property type="gene ID" value="YKR042W"/>
</dbReference>
<dbReference type="GeneID" id="853916"/>
<dbReference type="KEGG" id="sce:YKR042W"/>
<dbReference type="AGR" id="SGD:S000001750"/>
<dbReference type="SGD" id="S000001750">
    <property type="gene designation" value="UTH1"/>
</dbReference>
<dbReference type="VEuPathDB" id="FungiDB:YKR042W"/>
<dbReference type="eggNOG" id="ENOG502QREM">
    <property type="taxonomic scope" value="Eukaryota"/>
</dbReference>
<dbReference type="GeneTree" id="ENSGT00940000176328"/>
<dbReference type="HOGENOM" id="CLU_033459_0_0_1"/>
<dbReference type="InParanoid" id="P36135"/>
<dbReference type="OMA" id="CIWGTEG"/>
<dbReference type="OrthoDB" id="5339822at2759"/>
<dbReference type="BioCyc" id="YEAST:G3O-32013-MONOMER"/>
<dbReference type="BioGRID-ORCS" id="853916">
    <property type="hits" value="5 hits in 10 CRISPR screens"/>
</dbReference>
<dbReference type="PRO" id="PR:P36135"/>
<dbReference type="Proteomes" id="UP000002311">
    <property type="component" value="Chromosome XI"/>
</dbReference>
<dbReference type="RNAct" id="P36135">
    <property type="molecule type" value="protein"/>
</dbReference>
<dbReference type="GO" id="GO:0009986">
    <property type="term" value="C:cell surface"/>
    <property type="evidence" value="ECO:0000318"/>
    <property type="project" value="GO_Central"/>
</dbReference>
<dbReference type="GO" id="GO:0005576">
    <property type="term" value="C:extracellular region"/>
    <property type="evidence" value="ECO:0007669"/>
    <property type="project" value="UniProtKB-KW"/>
</dbReference>
<dbReference type="GO" id="GO:0009277">
    <property type="term" value="C:fungal-type cell wall"/>
    <property type="evidence" value="ECO:0000318"/>
    <property type="project" value="GO_Central"/>
</dbReference>
<dbReference type="GO" id="GO:0005743">
    <property type="term" value="C:mitochondrial inner membrane"/>
    <property type="evidence" value="ECO:0000314"/>
    <property type="project" value="SGD"/>
</dbReference>
<dbReference type="GO" id="GO:0005741">
    <property type="term" value="C:mitochondrial outer membrane"/>
    <property type="evidence" value="ECO:0007669"/>
    <property type="project" value="UniProtKB-SubCell"/>
</dbReference>
<dbReference type="GO" id="GO:0016798">
    <property type="term" value="F:hydrolase activity, acting on glycosyl bonds"/>
    <property type="evidence" value="ECO:0007669"/>
    <property type="project" value="UniProtKB-KW"/>
</dbReference>
<dbReference type="GO" id="GO:0000422">
    <property type="term" value="P:autophagy of mitochondrion"/>
    <property type="evidence" value="ECO:0000315"/>
    <property type="project" value="SGD"/>
</dbReference>
<dbReference type="GO" id="GO:0000917">
    <property type="term" value="P:division septum assembly"/>
    <property type="evidence" value="ECO:0007669"/>
    <property type="project" value="UniProtKB-KW"/>
</dbReference>
<dbReference type="GO" id="GO:0009272">
    <property type="term" value="P:fungal-type cell wall biogenesis"/>
    <property type="evidence" value="ECO:0000315"/>
    <property type="project" value="SGD"/>
</dbReference>
<dbReference type="GO" id="GO:0031505">
    <property type="term" value="P:fungal-type cell wall organization"/>
    <property type="evidence" value="ECO:0000318"/>
    <property type="project" value="GO_Central"/>
</dbReference>
<dbReference type="GO" id="GO:0000272">
    <property type="term" value="P:polysaccharide catabolic process"/>
    <property type="evidence" value="ECO:0007669"/>
    <property type="project" value="UniProtKB-KW"/>
</dbReference>
<dbReference type="InterPro" id="IPR051526">
    <property type="entry name" value="Beta-Glucosidase_SUN"/>
</dbReference>
<dbReference type="InterPro" id="IPR005556">
    <property type="entry name" value="SUN"/>
</dbReference>
<dbReference type="PANTHER" id="PTHR31316">
    <property type="entry name" value="BETA-GLUCOSIDASE-LIKE PROTEIN NCA3, MITOCHONDRIAL-RELATED"/>
    <property type="match status" value="1"/>
</dbReference>
<dbReference type="PANTHER" id="PTHR31316:SF2">
    <property type="entry name" value="BETA-GLUCOSIDASE-LIKE PROTEIN NCA3, MITOCHONDRIAL-RELATED"/>
    <property type="match status" value="1"/>
</dbReference>
<dbReference type="Pfam" id="PF03856">
    <property type="entry name" value="SUN"/>
    <property type="match status" value="1"/>
</dbReference>
<evidence type="ECO:0000255" key="1"/>
<evidence type="ECO:0000269" key="2">
    <source>
    </source>
</evidence>
<evidence type="ECO:0000269" key="3">
    <source>
    </source>
</evidence>
<evidence type="ECO:0000269" key="4">
    <source>
    </source>
</evidence>
<evidence type="ECO:0000269" key="5">
    <source>
    </source>
</evidence>
<evidence type="ECO:0000269" key="6">
    <source>
    </source>
</evidence>
<evidence type="ECO:0000269" key="7">
    <source>
    </source>
</evidence>
<evidence type="ECO:0000269" key="8">
    <source>
    </source>
</evidence>
<evidence type="ECO:0000269" key="9">
    <source>
    </source>
</evidence>
<evidence type="ECO:0000269" key="10">
    <source>
    </source>
</evidence>
<evidence type="ECO:0000269" key="11">
    <source>
    </source>
</evidence>
<evidence type="ECO:0000305" key="12"/>
<organism>
    <name type="scientific">Saccharomyces cerevisiae (strain ATCC 204508 / S288c)</name>
    <name type="common">Baker's yeast</name>
    <dbReference type="NCBI Taxonomy" id="559292"/>
    <lineage>
        <taxon>Eukaryota</taxon>
        <taxon>Fungi</taxon>
        <taxon>Dikarya</taxon>
        <taxon>Ascomycota</taxon>
        <taxon>Saccharomycotina</taxon>
        <taxon>Saccharomycetes</taxon>
        <taxon>Saccharomycetales</taxon>
        <taxon>Saccharomycetaceae</taxon>
        <taxon>Saccharomyces</taxon>
    </lineage>
</organism>
<protein>
    <recommendedName>
        <fullName>Probable secreted beta-glucosidase UTH1</fullName>
        <ecNumber>3.2.1.-</ecNumber>
    </recommendedName>
    <alternativeName>
        <fullName>Youth protein 1</fullName>
    </alternativeName>
</protein>
<accession>P36135</accession>
<accession>D6VXA4</accession>
<gene>
    <name type="primary">UTH1</name>
    <name type="ordered locus">YKR042W</name>
</gene>
<reference key="1">
    <citation type="journal article" date="1994" name="Nature">
        <title>Complete DNA sequence of yeast chromosome XI.</title>
        <authorList>
            <person name="Dujon B."/>
            <person name="Alexandraki D."/>
            <person name="Andre B."/>
            <person name="Ansorge W."/>
            <person name="Baladron V."/>
            <person name="Ballesta J.P.G."/>
            <person name="Banrevi A."/>
            <person name="Bolle P.-A."/>
            <person name="Bolotin-Fukuhara M."/>
            <person name="Bossier P."/>
            <person name="Bou G."/>
            <person name="Boyer J."/>
            <person name="Buitrago M.J."/>
            <person name="Cheret G."/>
            <person name="Colleaux L."/>
            <person name="Daignan-Fornier B."/>
            <person name="del Rey F."/>
            <person name="Dion C."/>
            <person name="Domdey H."/>
            <person name="Duesterhoeft A."/>
            <person name="Duesterhus S."/>
            <person name="Entian K.-D."/>
            <person name="Erfle H."/>
            <person name="Esteban P.F."/>
            <person name="Feldmann H."/>
            <person name="Fernandes L."/>
            <person name="Fobo G.M."/>
            <person name="Fritz C."/>
            <person name="Fukuhara H."/>
            <person name="Gabel C."/>
            <person name="Gaillon L."/>
            <person name="Garcia-Cantalejo J.M."/>
            <person name="Garcia-Ramirez J.J."/>
            <person name="Gent M.E."/>
            <person name="Ghazvini M."/>
            <person name="Goffeau A."/>
            <person name="Gonzalez A."/>
            <person name="Grothues D."/>
            <person name="Guerreiro P."/>
            <person name="Hegemann J.H."/>
            <person name="Hewitt N."/>
            <person name="Hilger F."/>
            <person name="Hollenberg C.P."/>
            <person name="Horaitis O."/>
            <person name="Indge K.J."/>
            <person name="Jacquier A."/>
            <person name="James C.M."/>
            <person name="Jauniaux J.-C."/>
            <person name="Jimenez A."/>
            <person name="Keuchel H."/>
            <person name="Kirchrath L."/>
            <person name="Kleine K."/>
            <person name="Koetter P."/>
            <person name="Legrain P."/>
            <person name="Liebl S."/>
            <person name="Louis E.J."/>
            <person name="Maia e Silva A."/>
            <person name="Marck C."/>
            <person name="Monnier A.-L."/>
            <person name="Moestl D."/>
            <person name="Mueller S."/>
            <person name="Obermaier B."/>
            <person name="Oliver S.G."/>
            <person name="Pallier C."/>
            <person name="Pascolo S."/>
            <person name="Pfeiffer F."/>
            <person name="Philippsen P."/>
            <person name="Planta R.J."/>
            <person name="Pohl F.M."/>
            <person name="Pohl T.M."/>
            <person name="Poehlmann R."/>
            <person name="Portetelle D."/>
            <person name="Purnelle B."/>
            <person name="Puzos V."/>
            <person name="Ramezani Rad M."/>
            <person name="Rasmussen S.W."/>
            <person name="Remacha M.A."/>
            <person name="Revuelta J.L."/>
            <person name="Richard G.-F."/>
            <person name="Rieger M."/>
            <person name="Rodrigues-Pousada C."/>
            <person name="Rose M."/>
            <person name="Rupp T."/>
            <person name="Santos M.A."/>
            <person name="Schwager C."/>
            <person name="Sensen C."/>
            <person name="Skala J."/>
            <person name="Soares H."/>
            <person name="Sor F."/>
            <person name="Stegemann J."/>
            <person name="Tettelin H."/>
            <person name="Thierry A."/>
            <person name="Tzermia M."/>
            <person name="Urrestarazu L.A."/>
            <person name="van Dyck L."/>
            <person name="van Vliet-Reedijk J.C."/>
            <person name="Valens M."/>
            <person name="Vandenbol M."/>
            <person name="Vilela C."/>
            <person name="Vissers S."/>
            <person name="von Wettstein D."/>
            <person name="Voss H."/>
            <person name="Wiemann S."/>
            <person name="Xu G."/>
            <person name="Zimmermann J."/>
            <person name="Haasemann M."/>
            <person name="Becker I."/>
            <person name="Mewes H.-W."/>
        </authorList>
    </citation>
    <scope>NUCLEOTIDE SEQUENCE [LARGE SCALE GENOMIC DNA]</scope>
    <source>
        <strain>ATCC 204508 / S288c</strain>
    </source>
</reference>
<reference key="2">
    <citation type="journal article" date="2014" name="G3 (Bethesda)">
        <title>The reference genome sequence of Saccharomyces cerevisiae: Then and now.</title>
        <authorList>
            <person name="Engel S.R."/>
            <person name="Dietrich F.S."/>
            <person name="Fisk D.G."/>
            <person name="Binkley G."/>
            <person name="Balakrishnan R."/>
            <person name="Costanzo M.C."/>
            <person name="Dwight S.S."/>
            <person name="Hitz B.C."/>
            <person name="Karra K."/>
            <person name="Nash R.S."/>
            <person name="Weng S."/>
            <person name="Wong E.D."/>
            <person name="Lloyd P."/>
            <person name="Skrzypek M.S."/>
            <person name="Miyasato S.R."/>
            <person name="Simison M."/>
            <person name="Cherry J.M."/>
        </authorList>
    </citation>
    <scope>GENOME REANNOTATION</scope>
    <source>
        <strain>ATCC 204508 / S288c</strain>
    </source>
</reference>
<reference key="3">
    <citation type="journal article" date="1995" name="Cell">
        <title>Mutation in the silencing gene SIR4 can delay aging in S.cerevisiae.</title>
        <authorList>
            <person name="Kennedy B.K."/>
            <person name="Austriaco N.R. Jr."/>
            <person name="Zhang J."/>
            <person name="Guarente L."/>
        </authorList>
    </citation>
    <scope>IDENTIFICATION</scope>
</reference>
<reference key="4">
    <citation type="journal article" date="1998" name="Curr. Genet.">
        <title>Involvement of the Saccharomyces cerevisiae UTH1 gene in the oxidative-stress response.</title>
        <authorList>
            <person name="Bandara P.D.S."/>
            <person name="Flattery-O'Brien J.A."/>
            <person name="Grant C.M."/>
            <person name="Dawes I.W."/>
        </authorList>
    </citation>
    <scope>IDENTIFICATION</scope>
    <scope>INDUCTION</scope>
    <scope>FUNCTION</scope>
</reference>
<reference key="5">
    <citation type="journal article" date="2000" name="Arch. Biochem. Biophys.">
        <title>The 'SUN' family: UTH1, an ageing gene, is also involved in the regulation of mitochondria biogenesis in Saccharomyces cerevisiae.</title>
        <authorList>
            <person name="Camougrand N.M."/>
            <person name="Mouassite M."/>
            <person name="Velours G.M."/>
            <person name="Guerin M.G."/>
        </authorList>
    </citation>
    <scope>FUNCTION</scope>
</reference>
<reference key="6">
    <citation type="journal article" date="2000" name="FEMS Microbiol. Lett.">
        <title>The SUN family of Saccharomyces cerevisiae: the double knock-out of UTH1 and SIM1 promotes defects in nucleus migration and increased drug sensitivity.</title>
        <authorList>
            <person name="Mouassite M."/>
            <person name="Guerin M.G."/>
            <person name="Camougrand N.M."/>
        </authorList>
    </citation>
    <scope>FUNCTION</scope>
</reference>
<reference key="7">
    <citation type="journal article" date="2000" name="Yeast">
        <title>The 'SUN' family: yeast SUN4/SCW3 is involved in cell septation.</title>
        <authorList>
            <person name="Mouassite M."/>
            <person name="Camougrand N.M."/>
            <person name="Schwob E."/>
            <person name="Demaison G."/>
            <person name="Laclau M."/>
            <person name="Guerin M.G."/>
        </authorList>
    </citation>
    <scope>FUNCTION</scope>
</reference>
<reference key="8">
    <citation type="journal article" date="2002" name="FEMS Microbiol. Lett.">
        <title>Dual cell wall/mitochondria localization of the 'SUN' family proteins.</title>
        <authorList>
            <person name="Velours G.M."/>
            <person name="Boucheron C."/>
            <person name="Manon S."/>
            <person name="Camougrand N.M."/>
        </authorList>
    </citation>
    <scope>SUBCELLULAR LOCATION</scope>
</reference>
<reference key="9">
    <citation type="journal article" date="2003" name="Mol. Microbiol.">
        <title>The product of the UTH1 gene, required for Bax-induced cell death in yeast, is involved in the response to rapamycin.</title>
        <authorList>
            <person name="Camougrand N.M."/>
            <person name="Grelaud-Coq A."/>
            <person name="Marza E."/>
            <person name="Priault M."/>
            <person name="Bessoule J.-J."/>
            <person name="Manon S."/>
        </authorList>
    </citation>
    <scope>FUNCTION</scope>
</reference>
<reference key="10">
    <citation type="journal article" date="2003" name="Nature">
        <title>Sequencing and comparison of yeast species to identify genes and regulatory elements.</title>
        <authorList>
            <person name="Kellis M."/>
            <person name="Patterson N."/>
            <person name="Endrizzi M."/>
            <person name="Birren B.W."/>
            <person name="Lander E.S."/>
        </authorList>
    </citation>
    <scope>IDENTIFICATION OF PROBABLE INITIATION SITE</scope>
</reference>
<reference key="11">
    <citation type="journal article" date="2003" name="Nature">
        <title>Global analysis of protein expression in yeast.</title>
        <authorList>
            <person name="Ghaemmaghami S."/>
            <person name="Huh W.-K."/>
            <person name="Bower K."/>
            <person name="Howson R.W."/>
            <person name="Belle A."/>
            <person name="Dephoure N."/>
            <person name="O'Shea E.K."/>
            <person name="Weissman J.S."/>
        </authorList>
    </citation>
    <scope>LEVEL OF PROTEIN EXPRESSION [LARGE SCALE ANALYSIS]</scope>
</reference>
<reference key="12">
    <citation type="journal article" date="2004" name="J. Biol. Chem.">
        <title>Uth1p is involved in the autophagic degradation of mitochondria.</title>
        <authorList>
            <person name="Kissova I."/>
            <person name="Deffieu M."/>
            <person name="Manon S."/>
            <person name="Camougrand N.M."/>
        </authorList>
    </citation>
    <scope>FUNCTION</scope>
</reference>
<reference key="13">
    <citation type="journal article" date="2005" name="Nucleic Acids Res.">
        <title>Mapping of transcription start sites in Saccharomyces cerevisiae using 5' SAGE.</title>
        <authorList>
            <person name="Zhang Z."/>
            <person name="Dietrich F.S."/>
        </authorList>
    </citation>
    <scope>IDENTIFICATION OF PROBABLE INITIATION SITE</scope>
</reference>
<reference key="14">
    <citation type="journal article" date="2007" name="Autophagy">
        <title>Selective and non-selective autophagic degradation of mitochondria in yeast.</title>
        <authorList>
            <person name="Kissova I."/>
            <person name="Salin B."/>
            <person name="Schaeffer J."/>
            <person name="Bhatia S."/>
            <person name="Manon S."/>
            <person name="Camougrand N.M."/>
        </authorList>
    </citation>
    <scope>FUNCTION</scope>
</reference>
<reference key="15">
    <citation type="journal article" date="2013" name="PLoS ONE">
        <title>SUN family proteins Sun4p, Uth1p and Sim1p are secreted from Saccharomyces cerevisiae and produced dependently on oxygen level.</title>
        <authorList>
            <person name="Kuznetsov E."/>
            <person name="Kucerova H."/>
            <person name="Vachova L."/>
            <person name="Palkova Z."/>
        </authorList>
    </citation>
    <scope>SUBCELLULAR LOCATION</scope>
    <scope>INDUCTION</scope>
    <scope>DISRUPTION PHENOTYPE</scope>
    <scope>FUNCTION</scope>
</reference>
<name>UTH1_YEAST</name>
<keyword id="KW-0072">Autophagy</keyword>
<keyword id="KW-0119">Carbohydrate metabolism</keyword>
<keyword id="KW-0131">Cell cycle</keyword>
<keyword id="KW-0132">Cell division</keyword>
<keyword id="KW-0134">Cell wall</keyword>
<keyword id="KW-0961">Cell wall biogenesis/degradation</keyword>
<keyword id="KW-0326">Glycosidase</keyword>
<keyword id="KW-0378">Hydrolase</keyword>
<keyword id="KW-0472">Membrane</keyword>
<keyword id="KW-0496">Mitochondrion</keyword>
<keyword id="KW-1000">Mitochondrion outer membrane</keyword>
<keyword id="KW-0624">Polysaccharide degradation</keyword>
<keyword id="KW-1185">Reference proteome</keyword>
<keyword id="KW-0964">Secreted</keyword>
<keyword id="KW-0717">Septation</keyword>
<keyword id="KW-0732">Signal</keyword>
<keyword id="KW-0346">Stress response</keyword>